<dbReference type="EMBL" id="L43967">
    <property type="protein sequence ID" value="AAC71352.1"/>
    <property type="molecule type" value="Genomic_DNA"/>
</dbReference>
<dbReference type="EMBL" id="U02114">
    <property type="protein sequence ID" value="AAD12388.1"/>
    <property type="molecule type" value="Genomic_DNA"/>
</dbReference>
<dbReference type="PIR" id="I64214">
    <property type="entry name" value="I64214"/>
</dbReference>
<dbReference type="RefSeq" id="WP_010869348.1">
    <property type="nucleotide sequence ID" value="NC_000908.2"/>
</dbReference>
<dbReference type="SMR" id="P47381"/>
<dbReference type="STRING" id="243273.MG_135"/>
<dbReference type="GeneID" id="88282260"/>
<dbReference type="KEGG" id="mge:MG_135"/>
<dbReference type="eggNOG" id="ENOG5031YQW">
    <property type="taxonomic scope" value="Bacteria"/>
</dbReference>
<dbReference type="HOGENOM" id="CLU_993286_0_0_14"/>
<dbReference type="InParanoid" id="P47381"/>
<dbReference type="OrthoDB" id="404003at2"/>
<dbReference type="BioCyc" id="MGEN243273:G1GJ2-149-MONOMER"/>
<dbReference type="Proteomes" id="UP000000807">
    <property type="component" value="Chromosome"/>
</dbReference>
<dbReference type="GO" id="GO:0005886">
    <property type="term" value="C:plasma membrane"/>
    <property type="evidence" value="ECO:0007669"/>
    <property type="project" value="UniProtKB-SubCell"/>
</dbReference>
<dbReference type="InterPro" id="IPR035319">
    <property type="entry name" value="DUF5378"/>
</dbReference>
<dbReference type="Pfam" id="PF17349">
    <property type="entry name" value="DUF5378"/>
    <property type="match status" value="1"/>
</dbReference>
<evidence type="ECO:0000255" key="1"/>
<evidence type="ECO:0000305" key="2"/>
<name>Y135_MYCGE</name>
<proteinExistence type="predicted"/>
<gene>
    <name type="ordered locus">MG135</name>
</gene>
<sequence length="280" mass="31831">MQTLNYLVIILIIAGVISVLAFTPLVRKLKIRFYLIQVLAIVLFVYVFFGRQIIYLFPDVYGQNSQSSQNLDSLRLSRIFLLDLCPFFAVIAPVFVFLKQKKISGVLAVFGLFGALVTLFGELIFTPVNEQDIVNFIFVGTGNNQIYFMMHFLSLLVSLAIILWDNCFSLISFFYIHVFALIYFSYVALMVSVFKGQITGNTTGILASDWTNGEYKNVATFLNLSNSDPQLVFIVGFSLSYVAILLMTLFANIPTFMEMKKDKIFIKKENLIRKDLELLA</sequence>
<accession>P47381</accession>
<comment type="subcellular location">
    <subcellularLocation>
        <location evidence="2">Cell membrane</location>
        <topology evidence="2">Multi-pass membrane protein</topology>
    </subcellularLocation>
</comment>
<protein>
    <recommendedName>
        <fullName>Uncharacterized protein MG135</fullName>
    </recommendedName>
</protein>
<reference key="1">
    <citation type="journal article" date="1995" name="Science">
        <title>The minimal gene complement of Mycoplasma genitalium.</title>
        <authorList>
            <person name="Fraser C.M."/>
            <person name="Gocayne J.D."/>
            <person name="White O."/>
            <person name="Adams M.D."/>
            <person name="Clayton R.A."/>
            <person name="Fleischmann R.D."/>
            <person name="Bult C.J."/>
            <person name="Kerlavage A.R."/>
            <person name="Sutton G.G."/>
            <person name="Kelley J.M."/>
            <person name="Fritchman J.L."/>
            <person name="Weidman J.F."/>
            <person name="Small K.V."/>
            <person name="Sandusky M."/>
            <person name="Fuhrmann J.L."/>
            <person name="Nguyen D.T."/>
            <person name="Utterback T.R."/>
            <person name="Saudek D.M."/>
            <person name="Phillips C.A."/>
            <person name="Merrick J.M."/>
            <person name="Tomb J.-F."/>
            <person name="Dougherty B.A."/>
            <person name="Bott K.F."/>
            <person name="Hu P.-C."/>
            <person name="Lucier T.S."/>
            <person name="Peterson S.N."/>
            <person name="Smith H.O."/>
            <person name="Hutchison C.A. III"/>
            <person name="Venter J.C."/>
        </authorList>
    </citation>
    <scope>NUCLEOTIDE SEQUENCE [LARGE SCALE GENOMIC DNA]</scope>
    <source>
        <strain>ATCC 33530 / DSM 19775 / NCTC 10195 / G37</strain>
    </source>
</reference>
<reference key="2">
    <citation type="journal article" date="1993" name="J. Bacteriol.">
        <title>A survey of the Mycoplasma genitalium genome by using random sequencing.</title>
        <authorList>
            <person name="Peterson S.N."/>
            <person name="Hu P.-C."/>
            <person name="Bott K.F."/>
            <person name="Hutchison C.A. III"/>
        </authorList>
    </citation>
    <scope>NUCLEOTIDE SEQUENCE [GENOMIC DNA] OF 163-260</scope>
    <source>
        <strain>ATCC 33530 / DSM 19775 / NCTC 10195 / G37</strain>
    </source>
</reference>
<feature type="chain" id="PRO_0000210438" description="Uncharacterized protein MG135">
    <location>
        <begin position="1"/>
        <end position="280"/>
    </location>
</feature>
<feature type="transmembrane region" description="Helical" evidence="1">
    <location>
        <begin position="6"/>
        <end position="26"/>
    </location>
</feature>
<feature type="transmembrane region" description="Helical" evidence="1">
    <location>
        <begin position="38"/>
        <end position="58"/>
    </location>
</feature>
<feature type="transmembrane region" description="Helical" evidence="1">
    <location>
        <begin position="79"/>
        <end position="99"/>
    </location>
</feature>
<feature type="transmembrane region" description="Helical" evidence="1">
    <location>
        <begin position="105"/>
        <end position="125"/>
    </location>
</feature>
<feature type="transmembrane region" description="Helical" evidence="1">
    <location>
        <begin position="144"/>
        <end position="164"/>
    </location>
</feature>
<feature type="transmembrane region" description="Helical" evidence="1">
    <location>
        <begin position="171"/>
        <end position="191"/>
    </location>
</feature>
<feature type="transmembrane region" description="Helical" evidence="1">
    <location>
        <begin position="231"/>
        <end position="251"/>
    </location>
</feature>
<organism>
    <name type="scientific">Mycoplasma genitalium (strain ATCC 33530 / DSM 19775 / NCTC 10195 / G37)</name>
    <name type="common">Mycoplasmoides genitalium</name>
    <dbReference type="NCBI Taxonomy" id="243273"/>
    <lineage>
        <taxon>Bacteria</taxon>
        <taxon>Bacillati</taxon>
        <taxon>Mycoplasmatota</taxon>
        <taxon>Mycoplasmoidales</taxon>
        <taxon>Mycoplasmoidaceae</taxon>
        <taxon>Mycoplasmoides</taxon>
    </lineage>
</organism>
<keyword id="KW-1003">Cell membrane</keyword>
<keyword id="KW-0472">Membrane</keyword>
<keyword id="KW-1185">Reference proteome</keyword>
<keyword id="KW-0812">Transmembrane</keyword>
<keyword id="KW-1133">Transmembrane helix</keyword>